<name>FOLM_PEA</name>
<protein>
    <recommendedName>
        <fullName evidence="5">Folate synthesis bifunctional protein, mitochondrial</fullName>
    </recommendedName>
    <domain>
        <recommendedName>
            <fullName evidence="5">6-hydroxymethyl-7,8-dihydropterin pyrophosphokinase</fullName>
            <shortName evidence="5">HPPK</shortName>
            <ecNumber evidence="4">2.7.6.3</ecNumber>
        </recommendedName>
        <alternativeName>
            <fullName>2-amino-4-hydroxy-6-hydroxymethyldihydropteridine diphosphokinase</fullName>
        </alternativeName>
        <alternativeName>
            <fullName>7,8-dihydro-6-hydroxymethylpterin-pyrophosphokinase</fullName>
            <shortName>PPPK</shortName>
        </alternativeName>
    </domain>
    <domain>
        <recommendedName>
            <fullName evidence="5">Dihydropteroate synthase</fullName>
            <shortName evidence="5">DHPS</shortName>
            <ecNumber evidence="4">2.5.1.15</ecNumber>
        </recommendedName>
    </domain>
</protein>
<accession>O04862</accession>
<gene>
    <name evidence="5" type="primary">MitHPPK/DHPS</name>
</gene>
<evidence type="ECO:0000250" key="1">
    <source>
        <dbReference type="UniProtKB" id="P0AC13"/>
    </source>
</evidence>
<evidence type="ECO:0000250" key="2">
    <source>
        <dbReference type="UniProtKB" id="P9WND1"/>
    </source>
</evidence>
<evidence type="ECO:0000255" key="3">
    <source>
        <dbReference type="PROSITE-ProRule" id="PRU00334"/>
    </source>
</evidence>
<evidence type="ECO:0000269" key="4">
    <source>
    </source>
</evidence>
<evidence type="ECO:0000303" key="5">
    <source>
    </source>
</evidence>
<evidence type="ECO:0000305" key="6"/>
<evidence type="ECO:0000312" key="7">
    <source>
        <dbReference type="EMBL" id="CAA69903.1"/>
    </source>
</evidence>
<keyword id="KW-0067">ATP-binding</keyword>
<keyword id="KW-0903">Direct protein sequencing</keyword>
<keyword id="KW-0289">Folate biosynthesis</keyword>
<keyword id="KW-0418">Kinase</keyword>
<keyword id="KW-0460">Magnesium</keyword>
<keyword id="KW-0479">Metal-binding</keyword>
<keyword id="KW-0496">Mitochondrion</keyword>
<keyword id="KW-0511">Multifunctional enzyme</keyword>
<keyword id="KW-0547">Nucleotide-binding</keyword>
<keyword id="KW-0808">Transferase</keyword>
<keyword id="KW-0809">Transit peptide</keyword>
<feature type="transit peptide" description="Mitochondrion" evidence="4">
    <location>
        <begin position="1"/>
        <end position="28"/>
    </location>
</feature>
<feature type="chain" id="PRO_5000146957" description="Folate synthesis bifunctional protein, mitochondrial">
    <location>
        <begin position="29"/>
        <end position="515"/>
    </location>
</feature>
<feature type="domain" description="Pterin-binding" evidence="3">
    <location>
        <begin position="230"/>
        <end position="498"/>
    </location>
</feature>
<feature type="region of interest" description="HPPK" evidence="6">
    <location>
        <begin position="47"/>
        <end position="172"/>
    </location>
</feature>
<feature type="region of interest" description="DHPS">
    <location>
        <begin position="232"/>
        <end position="515"/>
    </location>
</feature>
<feature type="binding site" evidence="2">
    <location>
        <position position="237"/>
    </location>
    <ligand>
        <name>Mg(2+)</name>
        <dbReference type="ChEBI" id="CHEBI:18420"/>
    </ligand>
</feature>
<feature type="binding site" evidence="1">
    <location>
        <position position="277"/>
    </location>
    <ligand>
        <name>(7,8-dihydropterin-6-yl)methyl diphosphate</name>
        <dbReference type="ChEBI" id="CHEBI:72950"/>
    </ligand>
</feature>
<feature type="binding site" evidence="1">
    <location>
        <position position="314"/>
    </location>
    <ligand>
        <name>(7,8-dihydropterin-6-yl)methyl diphosphate</name>
        <dbReference type="ChEBI" id="CHEBI:72950"/>
    </ligand>
</feature>
<feature type="binding site" evidence="1">
    <location>
        <position position="333"/>
    </location>
    <ligand>
        <name>(7,8-dihydropterin-6-yl)methyl diphosphate</name>
        <dbReference type="ChEBI" id="CHEBI:72950"/>
    </ligand>
</feature>
<feature type="binding site" evidence="1">
    <location>
        <position position="406"/>
    </location>
    <ligand>
        <name>(7,8-dihydropterin-6-yl)methyl diphosphate</name>
        <dbReference type="ChEBI" id="CHEBI:72950"/>
    </ligand>
</feature>
<feature type="binding site" evidence="1">
    <location>
        <position position="451"/>
    </location>
    <ligand>
        <name>(7,8-dihydropterin-6-yl)methyl diphosphate</name>
        <dbReference type="ChEBI" id="CHEBI:72950"/>
    </ligand>
</feature>
<feature type="binding site" evidence="1">
    <location>
        <begin position="486"/>
        <end position="488"/>
    </location>
    <ligand>
        <name>(7,8-dihydropterin-6-yl)methyl diphosphate</name>
        <dbReference type="ChEBI" id="CHEBI:72950"/>
    </ligand>
</feature>
<proteinExistence type="evidence at protein level"/>
<reference key="1">
    <citation type="journal article" date="1997" name="EMBO J.">
        <title>Folate biosynthesis in higher plants: purification and molecular cloning of a bifunctional 6-hydroxymethyl-7,8-dihydropterin pyrophosphokinase/7,8-dihydropteroate synthase localized in mitochondria.</title>
        <authorList>
            <person name="Rebeille F."/>
            <person name="Macherel D."/>
            <person name="Mouillon J.M."/>
            <person name="Garin J."/>
            <person name="Douce R."/>
        </authorList>
    </citation>
    <scope>NUCLEOTIDE SEQUENCE [MRNA]</scope>
    <scope>PROTEIN SEQUENCE OF 29-40; 121-136; 328-338 AND 415-431</scope>
    <scope>FUNCTION</scope>
    <scope>CATALYTIC ACTIVITY</scope>
    <scope>BIOPHYSICOCHEMICAL PROPERTIES</scope>
    <scope>COFACTOR</scope>
    <scope>SUBCELLULAR LOCATION</scope>
    <scope>SUBUNIT</scope>
    <scope>LACK OF INDUCTION BY LIGHT</scope>
    <source>
        <strain>cv. Douce Provence</strain>
    </source>
</reference>
<dbReference type="EC" id="2.7.6.3" evidence="4"/>
<dbReference type="EC" id="2.5.1.15" evidence="4"/>
<dbReference type="EMBL" id="Y08611">
    <property type="protein sequence ID" value="CAA69903.1"/>
    <property type="molecule type" value="mRNA"/>
</dbReference>
<dbReference type="PIR" id="T06595">
    <property type="entry name" value="T06595"/>
</dbReference>
<dbReference type="SMR" id="O04862"/>
<dbReference type="EnsemblPlants" id="Psat2g131720.1">
    <property type="protein sequence ID" value="Psat2g131720.1.cds"/>
    <property type="gene ID" value="Psat2g131720"/>
</dbReference>
<dbReference type="Gramene" id="Psat2g131720.1">
    <property type="protein sequence ID" value="Psat2g131720.1.cds"/>
    <property type="gene ID" value="Psat2g131720"/>
</dbReference>
<dbReference type="OrthoDB" id="615426at2759"/>
<dbReference type="SABIO-RK" id="O04862"/>
<dbReference type="UniPathway" id="UPA00077">
    <property type="reaction ID" value="UER00155"/>
</dbReference>
<dbReference type="UniPathway" id="UPA00077">
    <property type="reaction ID" value="UER00156"/>
</dbReference>
<dbReference type="GO" id="GO:0005739">
    <property type="term" value="C:mitochondrion"/>
    <property type="evidence" value="ECO:0000314"/>
    <property type="project" value="UniProtKB"/>
</dbReference>
<dbReference type="GO" id="GO:0003848">
    <property type="term" value="F:2-amino-4-hydroxy-6-hydroxymethyldihydropteridine diphosphokinase activity"/>
    <property type="evidence" value="ECO:0000314"/>
    <property type="project" value="UniProtKB"/>
</dbReference>
<dbReference type="GO" id="GO:0005524">
    <property type="term" value="F:ATP binding"/>
    <property type="evidence" value="ECO:0007669"/>
    <property type="project" value="UniProtKB-KW"/>
</dbReference>
<dbReference type="GO" id="GO:0004156">
    <property type="term" value="F:dihydropteroate synthase activity"/>
    <property type="evidence" value="ECO:0000314"/>
    <property type="project" value="UniProtKB"/>
</dbReference>
<dbReference type="GO" id="GO:0016301">
    <property type="term" value="F:kinase activity"/>
    <property type="evidence" value="ECO:0007669"/>
    <property type="project" value="UniProtKB-KW"/>
</dbReference>
<dbReference type="GO" id="GO:0000287">
    <property type="term" value="F:magnesium ion binding"/>
    <property type="evidence" value="ECO:0000314"/>
    <property type="project" value="UniProtKB"/>
</dbReference>
<dbReference type="GO" id="GO:0046656">
    <property type="term" value="P:folic acid biosynthetic process"/>
    <property type="evidence" value="ECO:0000314"/>
    <property type="project" value="UniProtKB"/>
</dbReference>
<dbReference type="GO" id="GO:0046654">
    <property type="term" value="P:tetrahydrofolate biosynthetic process"/>
    <property type="evidence" value="ECO:0007669"/>
    <property type="project" value="UniProtKB-UniPathway"/>
</dbReference>
<dbReference type="CDD" id="cd00739">
    <property type="entry name" value="DHPS"/>
    <property type="match status" value="1"/>
</dbReference>
<dbReference type="CDD" id="cd00483">
    <property type="entry name" value="HPPK"/>
    <property type="match status" value="1"/>
</dbReference>
<dbReference type="FunFam" id="3.20.20.20:FF:000006">
    <property type="entry name" value="Dihydropteroate synthase"/>
    <property type="match status" value="1"/>
</dbReference>
<dbReference type="FunFam" id="3.30.70.560:FF:000003">
    <property type="entry name" value="Folate synthesis bifunctional protein"/>
    <property type="match status" value="1"/>
</dbReference>
<dbReference type="Gene3D" id="3.30.70.560">
    <property type="entry name" value="7,8-Dihydro-6-hydroxymethylpterin-pyrophosphokinase HPPK"/>
    <property type="match status" value="1"/>
</dbReference>
<dbReference type="Gene3D" id="3.20.20.20">
    <property type="entry name" value="Dihydropteroate synthase-like"/>
    <property type="match status" value="1"/>
</dbReference>
<dbReference type="InterPro" id="IPR045031">
    <property type="entry name" value="DHP_synth-like"/>
</dbReference>
<dbReference type="InterPro" id="IPR006390">
    <property type="entry name" value="DHP_synth_dom"/>
</dbReference>
<dbReference type="InterPro" id="IPR011005">
    <property type="entry name" value="Dihydropteroate_synth-like_sf"/>
</dbReference>
<dbReference type="InterPro" id="IPR000550">
    <property type="entry name" value="Hppk"/>
</dbReference>
<dbReference type="InterPro" id="IPR035907">
    <property type="entry name" value="Hppk_sf"/>
</dbReference>
<dbReference type="InterPro" id="IPR000489">
    <property type="entry name" value="Pterin-binding_dom"/>
</dbReference>
<dbReference type="NCBIfam" id="TIGR01496">
    <property type="entry name" value="DHPS"/>
    <property type="match status" value="1"/>
</dbReference>
<dbReference type="NCBIfam" id="TIGR01498">
    <property type="entry name" value="folK"/>
    <property type="match status" value="1"/>
</dbReference>
<dbReference type="PANTHER" id="PTHR20941">
    <property type="entry name" value="FOLATE SYNTHESIS PROTEINS"/>
    <property type="match status" value="1"/>
</dbReference>
<dbReference type="PANTHER" id="PTHR20941:SF1">
    <property type="entry name" value="FOLIC ACID SYNTHESIS PROTEIN FOL1"/>
    <property type="match status" value="1"/>
</dbReference>
<dbReference type="Pfam" id="PF01288">
    <property type="entry name" value="HPPK"/>
    <property type="match status" value="1"/>
</dbReference>
<dbReference type="Pfam" id="PF00809">
    <property type="entry name" value="Pterin_bind"/>
    <property type="match status" value="1"/>
</dbReference>
<dbReference type="SUPFAM" id="SSF55083">
    <property type="entry name" value="6-hydroxymethyl-7,8-dihydropterin pyrophosphokinase, HPPK"/>
    <property type="match status" value="1"/>
</dbReference>
<dbReference type="SUPFAM" id="SSF51717">
    <property type="entry name" value="Dihydropteroate synthetase-like"/>
    <property type="match status" value="1"/>
</dbReference>
<dbReference type="PROSITE" id="PS00792">
    <property type="entry name" value="DHPS_1"/>
    <property type="match status" value="1"/>
</dbReference>
<dbReference type="PROSITE" id="PS00793">
    <property type="entry name" value="DHPS_2"/>
    <property type="match status" value="1"/>
</dbReference>
<dbReference type="PROSITE" id="PS00794">
    <property type="entry name" value="HPPK"/>
    <property type="match status" value="1"/>
</dbReference>
<dbReference type="PROSITE" id="PS50972">
    <property type="entry name" value="PTERIN_BINDING"/>
    <property type="match status" value="1"/>
</dbReference>
<sequence>MSILKCLGVRGNQLCAARNYLKVLGFSSFHTAPNSSIEIQTQDEEVVIALGSNVGDRLHNFKEALKLMRKSGIHITRHASLYETAPAYVTDQPRFLNSAVRADTKLGPHELLAALKRIEKDMGRTDGIRYGPRPIDLDILFYGKFKVRSDILTVPHERIWERPFVMAPLMDLLGTAIDSDTVASWHSFSGHSGGLNALWEKLGGESLIGEEGMYRVMPVANGLLDWSRRTLVMGILNLTPDSFSDGGNFQSVKSAVSQARLMISEGADIIDIGAQSTRPMASRISAEEELGRLIPVLEAVMSIPEVEGKLISVDTFYSEVALEAVRKGAHIINDVSAGKLDASMFKVMAELDVPYVAMHMRGDPSTMQDSENLKYDNVCKDISSELYSRVREAEISGIPAWRIIMDPGIGFSKKTEDNLAALTGIPDIREEISKRSLAISHAPILIGPSRKRFLGEICSRPSAVDRDPATIASVTAGVLCGANIVRVHNVKDNLDAVKLCDAILKQKSSPIKFKQ</sequence>
<comment type="function">
    <text evidence="4">Catalyzes the first two consecutive steps of tetrahydrofolate biosynthesis.</text>
</comment>
<comment type="catalytic activity">
    <reaction evidence="4">
        <text>6-hydroxymethyl-7,8-dihydropterin + ATP = (7,8-dihydropterin-6-yl)methyl diphosphate + AMP + H(+)</text>
        <dbReference type="Rhea" id="RHEA:11412"/>
        <dbReference type="ChEBI" id="CHEBI:15378"/>
        <dbReference type="ChEBI" id="CHEBI:30616"/>
        <dbReference type="ChEBI" id="CHEBI:44841"/>
        <dbReference type="ChEBI" id="CHEBI:72950"/>
        <dbReference type="ChEBI" id="CHEBI:456215"/>
        <dbReference type="EC" id="2.7.6.3"/>
    </reaction>
</comment>
<comment type="catalytic activity">
    <reaction evidence="4">
        <text>(7,8-dihydropterin-6-yl)methyl diphosphate + 4-aminobenzoate = 7,8-dihydropteroate + diphosphate</text>
        <dbReference type="Rhea" id="RHEA:19949"/>
        <dbReference type="ChEBI" id="CHEBI:17836"/>
        <dbReference type="ChEBI" id="CHEBI:17839"/>
        <dbReference type="ChEBI" id="CHEBI:33019"/>
        <dbReference type="ChEBI" id="CHEBI:72950"/>
        <dbReference type="EC" id="2.5.1.15"/>
    </reaction>
</comment>
<comment type="cofactor">
    <cofactor evidence="1">
        <name>Mg(2+)</name>
        <dbReference type="ChEBI" id="CHEBI:18420"/>
    </cofactor>
</comment>
<comment type="biophysicochemical properties">
    <kinetics>
        <KM evidence="4">0.7 uM for 6-hydroxymethyl-7,8-dihydropterin</KM>
        <KM evidence="4">70 uM for ATP</KM>
        <KM evidence="4">30 uM for 6-hydroxymethyl-7,8-dihydropterin-pyrophosphate</KM>
        <KM evidence="4">0.6 uM for p-aminobenzoic acid</KM>
    </kinetics>
    <phDependence>
        <text evidence="4">Optimum pH is 9.</text>
    </phDependence>
    <temperatureDependence>
        <text evidence="4">Optimum temperature is 50 degrees Celsius.</text>
    </temperatureDependence>
</comment>
<comment type="pathway">
    <text evidence="6">Cofactor biosynthesis; tetrahydrofolate biosynthesis; 2-amino-4-hydroxy-6-hydroxymethyl-7,8-dihydropteridine diphosphate from 7,8-dihydroneopterin triphosphate: step 4/4.</text>
</comment>
<comment type="pathway">
    <text evidence="6">Cofactor biosynthesis; tetrahydrofolate biosynthesis; 7,8-dihydrofolate from 2-amino-4-hydroxy-6-hydroxymethyl-7,8-dihydropteridine diphosphate and 4-aminobenzoate: step 1/2.</text>
</comment>
<comment type="subunit">
    <text evidence="4">Homomultimer.</text>
</comment>
<comment type="subcellular location">
    <subcellularLocation>
        <location evidence="4">Mitochondrion</location>
    </subcellularLocation>
</comment>
<comment type="induction">
    <text evidence="4">Not induced by light.</text>
</comment>
<comment type="similarity">
    <text evidence="6">In the N-terminal section; belongs to the HPPK family.</text>
</comment>
<comment type="similarity">
    <text evidence="6">In the C-terminal section; belongs to the DHPS family.</text>
</comment>
<organism evidence="7">
    <name type="scientific">Pisum sativum</name>
    <name type="common">Garden pea</name>
    <name type="synonym">Lathyrus oleraceus</name>
    <dbReference type="NCBI Taxonomy" id="3888"/>
    <lineage>
        <taxon>Eukaryota</taxon>
        <taxon>Viridiplantae</taxon>
        <taxon>Streptophyta</taxon>
        <taxon>Embryophyta</taxon>
        <taxon>Tracheophyta</taxon>
        <taxon>Spermatophyta</taxon>
        <taxon>Magnoliopsida</taxon>
        <taxon>eudicotyledons</taxon>
        <taxon>Gunneridae</taxon>
        <taxon>Pentapetalae</taxon>
        <taxon>rosids</taxon>
        <taxon>fabids</taxon>
        <taxon>Fabales</taxon>
        <taxon>Fabaceae</taxon>
        <taxon>Papilionoideae</taxon>
        <taxon>50 kb inversion clade</taxon>
        <taxon>NPAAA clade</taxon>
        <taxon>Hologalegina</taxon>
        <taxon>IRL clade</taxon>
        <taxon>Fabeae</taxon>
        <taxon>Pisum</taxon>
    </lineage>
</organism>